<reference key="1">
    <citation type="journal article" date="1997" name="J. Bacteriol.">
        <title>Interactions between heterologous FtsA and FtsZ proteins at the FtsZ ring.</title>
        <authorList>
            <person name="Ma X."/>
            <person name="Sun Q."/>
            <person name="Wang R."/>
            <person name="Singh G."/>
            <person name="Jonietz E.L."/>
            <person name="Margolin W."/>
        </authorList>
    </citation>
    <scope>NUCLEOTIDE SEQUENCE [GENOMIC DNA]</scope>
    <source>
        <strain>A136</strain>
    </source>
</reference>
<comment type="function">
    <text evidence="1">Essential cell division protein that forms a contractile ring structure (Z ring) at the future cell division site. The regulation of the ring assembly controls the timing and the location of cell division. One of the functions of the FtsZ ring is to recruit other cell division proteins to the septum to produce a new cell wall between the dividing cells. Binds GTP and shows GTPase activity.</text>
</comment>
<comment type="subunit">
    <text evidence="1">Homodimer. Polymerizes to form a dynamic ring structure in a strictly GTP-dependent manner. Interacts directly with several other division proteins.</text>
</comment>
<comment type="subcellular location">
    <subcellularLocation>
        <location evidence="1">Cytoplasm</location>
    </subcellularLocation>
    <text evidence="1">Assembles at midcell at the inner surface of the cytoplasmic membrane.</text>
</comment>
<comment type="similarity">
    <text evidence="1">Belongs to the FtsZ family.</text>
</comment>
<protein>
    <recommendedName>
        <fullName evidence="1">Cell division protein FtsZ</fullName>
    </recommendedName>
</protein>
<dbReference type="EMBL" id="AF024659">
    <property type="protein sequence ID" value="AAC45821.1"/>
    <property type="molecule type" value="Genomic_DNA"/>
</dbReference>
<dbReference type="SMR" id="O30992"/>
<dbReference type="eggNOG" id="COG0206">
    <property type="taxonomic scope" value="Bacteria"/>
</dbReference>
<dbReference type="GO" id="GO:0032153">
    <property type="term" value="C:cell division site"/>
    <property type="evidence" value="ECO:0007669"/>
    <property type="project" value="UniProtKB-UniRule"/>
</dbReference>
<dbReference type="GO" id="GO:0005737">
    <property type="term" value="C:cytoplasm"/>
    <property type="evidence" value="ECO:0007669"/>
    <property type="project" value="UniProtKB-SubCell"/>
</dbReference>
<dbReference type="GO" id="GO:0005525">
    <property type="term" value="F:GTP binding"/>
    <property type="evidence" value="ECO:0007669"/>
    <property type="project" value="UniProtKB-UniRule"/>
</dbReference>
<dbReference type="GO" id="GO:0003924">
    <property type="term" value="F:GTPase activity"/>
    <property type="evidence" value="ECO:0007669"/>
    <property type="project" value="UniProtKB-UniRule"/>
</dbReference>
<dbReference type="GO" id="GO:0000917">
    <property type="term" value="P:division septum assembly"/>
    <property type="evidence" value="ECO:0007669"/>
    <property type="project" value="UniProtKB-KW"/>
</dbReference>
<dbReference type="GO" id="GO:0043093">
    <property type="term" value="P:FtsZ-dependent cytokinesis"/>
    <property type="evidence" value="ECO:0007669"/>
    <property type="project" value="UniProtKB-UniRule"/>
</dbReference>
<dbReference type="GO" id="GO:0051258">
    <property type="term" value="P:protein polymerization"/>
    <property type="evidence" value="ECO:0007669"/>
    <property type="project" value="UniProtKB-UniRule"/>
</dbReference>
<dbReference type="CDD" id="cd02201">
    <property type="entry name" value="FtsZ_type1"/>
    <property type="match status" value="1"/>
</dbReference>
<dbReference type="FunFam" id="3.30.1330.20:FF:000011">
    <property type="entry name" value="Cell division protein FtsZ"/>
    <property type="match status" value="1"/>
</dbReference>
<dbReference type="FunFam" id="3.40.50.1440:FF:000001">
    <property type="entry name" value="Cell division protein FtsZ"/>
    <property type="match status" value="1"/>
</dbReference>
<dbReference type="Gene3D" id="3.30.1330.20">
    <property type="entry name" value="Tubulin/FtsZ, C-terminal domain"/>
    <property type="match status" value="1"/>
</dbReference>
<dbReference type="Gene3D" id="3.40.50.1440">
    <property type="entry name" value="Tubulin/FtsZ, GTPase domain"/>
    <property type="match status" value="1"/>
</dbReference>
<dbReference type="HAMAP" id="MF_00909">
    <property type="entry name" value="FtsZ"/>
    <property type="match status" value="1"/>
</dbReference>
<dbReference type="InterPro" id="IPR000158">
    <property type="entry name" value="Cell_div_FtsZ"/>
</dbReference>
<dbReference type="InterPro" id="IPR017844">
    <property type="entry name" value="Cell_div_FtsZ_C"/>
</dbReference>
<dbReference type="InterPro" id="IPR020805">
    <property type="entry name" value="Cell_div_FtsZ_CS"/>
</dbReference>
<dbReference type="InterPro" id="IPR045061">
    <property type="entry name" value="FtsZ/CetZ"/>
</dbReference>
<dbReference type="InterPro" id="IPR024757">
    <property type="entry name" value="FtsZ_C"/>
</dbReference>
<dbReference type="InterPro" id="IPR008280">
    <property type="entry name" value="Tub_FtsZ_C"/>
</dbReference>
<dbReference type="InterPro" id="IPR037103">
    <property type="entry name" value="Tubulin/FtsZ-like_C"/>
</dbReference>
<dbReference type="InterPro" id="IPR018316">
    <property type="entry name" value="Tubulin/FtsZ_2-layer-sand-dom"/>
</dbReference>
<dbReference type="InterPro" id="IPR036525">
    <property type="entry name" value="Tubulin/FtsZ_GTPase_sf"/>
</dbReference>
<dbReference type="InterPro" id="IPR003008">
    <property type="entry name" value="Tubulin_FtsZ_GTPase"/>
</dbReference>
<dbReference type="NCBIfam" id="TIGR00065">
    <property type="entry name" value="ftsZ"/>
    <property type="match status" value="1"/>
</dbReference>
<dbReference type="NCBIfam" id="TIGR03483">
    <property type="entry name" value="FtsZ_alphas_C"/>
    <property type="match status" value="1"/>
</dbReference>
<dbReference type="PANTHER" id="PTHR30314">
    <property type="entry name" value="CELL DIVISION PROTEIN FTSZ-RELATED"/>
    <property type="match status" value="1"/>
</dbReference>
<dbReference type="PANTHER" id="PTHR30314:SF3">
    <property type="entry name" value="MITOCHONDRIAL DIVISION PROTEIN FSZA"/>
    <property type="match status" value="1"/>
</dbReference>
<dbReference type="Pfam" id="PF12327">
    <property type="entry name" value="FtsZ_C"/>
    <property type="match status" value="1"/>
</dbReference>
<dbReference type="Pfam" id="PF00091">
    <property type="entry name" value="Tubulin"/>
    <property type="match status" value="1"/>
</dbReference>
<dbReference type="PRINTS" id="PR00423">
    <property type="entry name" value="CELLDVISFTSZ"/>
</dbReference>
<dbReference type="SMART" id="SM00864">
    <property type="entry name" value="Tubulin"/>
    <property type="match status" value="1"/>
</dbReference>
<dbReference type="SMART" id="SM00865">
    <property type="entry name" value="Tubulin_C"/>
    <property type="match status" value="1"/>
</dbReference>
<dbReference type="SUPFAM" id="SSF55307">
    <property type="entry name" value="Tubulin C-terminal domain-like"/>
    <property type="match status" value="1"/>
</dbReference>
<dbReference type="SUPFAM" id="SSF52490">
    <property type="entry name" value="Tubulin nucleotide-binding domain-like"/>
    <property type="match status" value="1"/>
</dbReference>
<dbReference type="PROSITE" id="PS01134">
    <property type="entry name" value="FTSZ_1"/>
    <property type="match status" value="1"/>
</dbReference>
<dbReference type="PROSITE" id="PS01135">
    <property type="entry name" value="FTSZ_2"/>
    <property type="match status" value="1"/>
</dbReference>
<accession>O30992</accession>
<organism>
    <name type="scientific">Rhizobium radiobacter</name>
    <name type="common">Agrobacterium tumefaciens</name>
    <name type="synonym">Agrobacterium radiobacter</name>
    <dbReference type="NCBI Taxonomy" id="358"/>
    <lineage>
        <taxon>Bacteria</taxon>
        <taxon>Pseudomonadati</taxon>
        <taxon>Pseudomonadota</taxon>
        <taxon>Alphaproteobacteria</taxon>
        <taxon>Hyphomicrobiales</taxon>
        <taxon>Rhizobiaceae</taxon>
        <taxon>Rhizobium/Agrobacterium group</taxon>
        <taxon>Agrobacterium</taxon>
        <taxon>Agrobacterium tumefaciens complex</taxon>
    </lineage>
</organism>
<gene>
    <name evidence="1" type="primary">ftsZ</name>
</gene>
<sequence>MTIQLQKPDITELKPRITVFGVGGGGGNAVNNMITVGLQGVDFVVANTDAQALTMTKADRVIQLGVNVTEGLGAGSQPEVGRAAAEECIDEIIDHLNGTHMCFVTAGMGGGTGTGAAPVVAQAARNKGILTVGVVTKPFHFEGGRRMRLAEQGIEELQKSVDTLIVIPNQNLFRIANDKTTFADAFAMADQVLYSGVACITDLMVKEGLINLDFADVRSVMREMARPMMGTGEASGPARAMQAAEAAIANPLLDETSMKGAQGLLISITGGRDLTLFEVDEAATRIREEVDPDANIILGATFDEALEGLIRVSVVATGIDRVAGIGEQNIAEMRAAAAKPLIRPSAAVAPAPAAVQPAHAVSQAPKTVDQIAQTIRSAEAEMERELGFAAHQQPSQDFRPQSKLFASSPAEAPAALRPAQPVQQAAPAPVAQAPVYHAPEQVAVPAPRMQQAQAPVYQEPAPVGRQPEPVRMPKVEDFPPVVKAEMDHRDRATPVAQEERGPMGLLKRITNSLGRREEEEVPSDMMDAPSMAPQRRAPLSPEASLYAPRRGQLDDHGRATPSSSSHHDDDQLEIPAFLRRQSN</sequence>
<evidence type="ECO:0000255" key="1">
    <source>
        <dbReference type="HAMAP-Rule" id="MF_00909"/>
    </source>
</evidence>
<evidence type="ECO:0000256" key="2">
    <source>
        <dbReference type="SAM" id="MobiDB-lite"/>
    </source>
</evidence>
<proteinExistence type="inferred from homology"/>
<feature type="chain" id="PRO_0000114336" description="Cell division protein FtsZ">
    <location>
        <begin position="1"/>
        <end position="583"/>
    </location>
</feature>
<feature type="region of interest" description="Disordered" evidence="2">
    <location>
        <begin position="391"/>
        <end position="425"/>
    </location>
</feature>
<feature type="region of interest" description="Disordered" evidence="2">
    <location>
        <begin position="510"/>
        <end position="583"/>
    </location>
</feature>
<feature type="compositionally biased region" description="Low complexity" evidence="2">
    <location>
        <begin position="412"/>
        <end position="425"/>
    </location>
</feature>
<feature type="binding site" evidence="1">
    <location>
        <begin position="24"/>
        <end position="28"/>
    </location>
    <ligand>
        <name>GTP</name>
        <dbReference type="ChEBI" id="CHEBI:37565"/>
    </ligand>
</feature>
<feature type="binding site" evidence="1">
    <location>
        <begin position="111"/>
        <end position="113"/>
    </location>
    <ligand>
        <name>GTP</name>
        <dbReference type="ChEBI" id="CHEBI:37565"/>
    </ligand>
</feature>
<feature type="binding site" evidence="1">
    <location>
        <position position="142"/>
    </location>
    <ligand>
        <name>GTP</name>
        <dbReference type="ChEBI" id="CHEBI:37565"/>
    </ligand>
</feature>
<feature type="binding site" evidence="1">
    <location>
        <position position="146"/>
    </location>
    <ligand>
        <name>GTP</name>
        <dbReference type="ChEBI" id="CHEBI:37565"/>
    </ligand>
</feature>
<feature type="binding site" evidence="1">
    <location>
        <position position="190"/>
    </location>
    <ligand>
        <name>GTP</name>
        <dbReference type="ChEBI" id="CHEBI:37565"/>
    </ligand>
</feature>
<keyword id="KW-0131">Cell cycle</keyword>
<keyword id="KW-0132">Cell division</keyword>
<keyword id="KW-0963">Cytoplasm</keyword>
<keyword id="KW-0342">GTP-binding</keyword>
<keyword id="KW-0547">Nucleotide-binding</keyword>
<keyword id="KW-0717">Septation</keyword>
<name>FTSZ_RHIRD</name>